<feature type="chain" id="PRO_0000376801" description="Capsid scaffolding protein">
    <location>
        <begin position="1"/>
        <end position="528"/>
    </location>
</feature>
<feature type="chain" id="PRO_0000027265" description="Assemblin" evidence="3">
    <location>
        <begin position="1"/>
        <end position="230"/>
    </location>
</feature>
<feature type="chain" id="PRO_0000027266" description="Assembly protein" evidence="3">
    <location>
        <begin position="231"/>
        <end position="528"/>
    </location>
</feature>
<feature type="region of interest" description="Interaction with pAP" evidence="3">
    <location>
        <begin position="270"/>
        <end position="288"/>
    </location>
</feature>
<feature type="region of interest" description="Disordered" evidence="4">
    <location>
        <begin position="394"/>
        <end position="431"/>
    </location>
</feature>
<feature type="region of interest" description="Interaction with major capsid protein" evidence="3">
    <location>
        <begin position="508"/>
        <end position="528"/>
    </location>
</feature>
<feature type="short sequence motif" description="Nuclear localization signal" evidence="1">
    <location>
        <begin position="416"/>
        <end position="422"/>
    </location>
</feature>
<feature type="active site" description="Charge relay system" evidence="3">
    <location>
        <position position="46"/>
    </location>
</feature>
<feature type="active site" description="Charge relay system" evidence="3">
    <location>
        <position position="116"/>
    </location>
</feature>
<feature type="active site" description="Charge relay system" evidence="3">
    <location>
        <position position="135"/>
    </location>
</feature>
<feature type="site" description="Cleavage; by assemblin; Release site" evidence="3">
    <location>
        <begin position="230"/>
        <end position="231"/>
    </location>
</feature>
<feature type="site" description="Cleavage; by assemblin; Maturation site" evidence="2">
    <location>
        <begin position="491"/>
        <end position="492"/>
    </location>
</feature>
<feature type="splice variant" id="VSP_037418" description="In isoform pAP." evidence="5">
    <location>
        <begin position="1"/>
        <end position="284"/>
    </location>
</feature>
<comment type="function">
    <molecule>Capsid scaffolding protein</molecule>
    <text evidence="3">Acts as a scaffold protein by binding major capsid protein in the cytoplasm, inducing the nuclear localization of both proteins. Multimerizes in the nucleus such as major capsid protein forms the icosahedral T=16 capsid. Autocatalytic cleavage releases the assembly protein, and subsequently abolishes interaction with major capsid protein. Cleavages products are evicted from the capsid before or during DNA packaging.</text>
</comment>
<comment type="function">
    <molecule>Assemblin</molecule>
    <text evidence="3">Protease that plays an essential role in virion assembly within the nucleus. Catalyzes the cleavage of the assembly protein after formation of the spherical procapsid. By that cleavage, the capsid matures and gains its icosahedral shape. The cleavage sites seem to include -Ala-Ser-, -Ala-Ala-, as well as Ala-Thr bonds. Assemblin and cleavages products are evicted from the capsid before or during DNA packaging.</text>
</comment>
<comment type="function">
    <molecule>Assembly protein</molecule>
    <text evidence="3">Plays a major role in capsid assembly. Acts as a scaffold protein by binding major capsid protein. Multimerizes in the nucleus such as major capsid protein forms the icosahedral T=16 capsid. Cleaved by assemblin after capsid completion. The cleavages products are evicted from the capsid before or during DNA packaging.</text>
</comment>
<comment type="catalytic activity">
    <molecule>Assemblin</molecule>
    <reaction evidence="3">
        <text>Cleaves -Ala-|-Ser- and -Ala-|-Ala- bonds in the scaffold protein.</text>
        <dbReference type="EC" id="3.4.21.97"/>
    </reaction>
</comment>
<comment type="subunit">
    <molecule>Capsid scaffolding protein</molecule>
    <text evidence="3">Homomultimer. Interacts with major capsid protein.</text>
</comment>
<comment type="subunit">
    <molecule>Assemblin</molecule>
    <text evidence="3">Exists in a monomer-dimer equilibrium with the dimer being the active species.</text>
</comment>
<comment type="subunit">
    <molecule>Assembly protein</molecule>
    <text evidence="3">Homomultimer. Interacts with major capsid protein.</text>
</comment>
<comment type="subcellular location">
    <molecule>Capsid scaffolding protein</molecule>
    <subcellularLocation>
        <location evidence="3">Host cytoplasm</location>
    </subcellularLocation>
</comment>
<comment type="subcellular location">
    <molecule>Assemblin</molecule>
    <subcellularLocation>
        <location evidence="3">Host nucleus</location>
    </subcellularLocation>
</comment>
<comment type="subcellular location">
    <molecule>Assembly protein</molecule>
    <subcellularLocation>
        <location evidence="3">Host nucleus</location>
    </subcellularLocation>
</comment>
<comment type="alternative products">
    <event type="alternative promoter"/>
    <isoform>
        <id>P24433-1</id>
        <name>Capsid scaffolding protein</name>
        <name>pPR</name>
        <sequence type="displayed"/>
    </isoform>
    <isoform>
        <id>P24433-2</id>
        <name>pAP</name>
        <name>Assembly protein</name>
        <sequence type="described" ref="VSP_037418"/>
    </isoform>
</comment>
<comment type="domain">
    <text evidence="3">Region of interaction between pPR and pAP is called Amino conserved domain (ACD). The region of interaction with major capsid protein is called carboxyl conserved domain (CCD).</text>
</comment>
<comment type="PTM">
    <molecule>Capsid scaffolding protein</molecule>
    <text evidence="3">Capsid scaffolding protein is cleaved by assemblin after formation of the spherical procapsid. As a result, the capsid obtains its mature, icosahedral shape. Cleavages occur at two or more sites: release (R-site) and maturation (M-site).</text>
</comment>
<comment type="similarity">
    <text evidence="3">Belongs to the herpesviridae capsid scaffolding protein family.</text>
</comment>
<keyword id="KW-0877">Alternative promoter usage</keyword>
<keyword id="KW-1035">Host cytoplasm</keyword>
<keyword id="KW-1048">Host nucleus</keyword>
<keyword id="KW-0378">Hydrolase</keyword>
<keyword id="KW-0597">Phosphoprotein</keyword>
<keyword id="KW-0645">Protease</keyword>
<keyword id="KW-1185">Reference proteome</keyword>
<keyword id="KW-0720">Serine protease</keyword>
<keyword id="KW-0118">Viral capsid assembly</keyword>
<keyword id="KW-1188">Viral release from host cell</keyword>
<evidence type="ECO:0000250" key="1"/>
<evidence type="ECO:0000250" key="2">
    <source>
        <dbReference type="UniProtKB" id="P16753"/>
    </source>
</evidence>
<evidence type="ECO:0000255" key="3">
    <source>
        <dbReference type="HAMAP-Rule" id="MF_04008"/>
    </source>
</evidence>
<evidence type="ECO:0000256" key="4">
    <source>
        <dbReference type="SAM" id="MobiDB-lite"/>
    </source>
</evidence>
<evidence type="ECO:0000305" key="5"/>
<accession>P24433</accession>
<gene>
    <name type="primary">U53</name>
    <name type="synonym">0R</name>
    <name type="synonym">XKRF1</name>
</gene>
<organismHost>
    <name type="scientific">Homo sapiens</name>
    <name type="common">Human</name>
    <dbReference type="NCBI Taxonomy" id="9606"/>
</organismHost>
<reference key="1">
    <citation type="journal article" date="1995" name="Virology">
        <title>The DNA sequence of human herpesvirus-6: structure, coding content, and genome evolution.</title>
        <authorList>
            <person name="Gompels U.A."/>
            <person name="Nicholas J."/>
            <person name="Lawrence G.L."/>
            <person name="Jones M."/>
            <person name="Thomson B.J."/>
            <person name="Martin M.E.D."/>
            <person name="Efstathiou S."/>
            <person name="Craxton M.A."/>
            <person name="Macaulay H.A."/>
        </authorList>
    </citation>
    <scope>NUCLEOTIDE SEQUENCE [LARGE SCALE GENOMIC DNA]</scope>
</reference>
<reference key="2">
    <citation type="journal article" date="1990" name="J. Virol.">
        <title>Human herpesvirus 6 is closely related to human cytomegalovirus.</title>
        <authorList>
            <person name="Lawrence G.L."/>
            <person name="Chee M."/>
            <person name="Craxton M.A."/>
            <person name="Gompels U.A."/>
            <person name="Honess R.W."/>
            <person name="Barrell B.G."/>
        </authorList>
    </citation>
    <scope>NUCLEOTIDE SEQUENCE [GENOMIC DNA] OF 410-528</scope>
</reference>
<protein>
    <recommendedName>
        <fullName evidence="3">Capsid scaffolding protein</fullName>
    </recommendedName>
    <alternativeName>
        <fullName>Capsid protein P40</fullName>
    </alternativeName>
    <alternativeName>
        <fullName evidence="3">Protease precursor</fullName>
        <shortName evidence="3">pPR</shortName>
    </alternativeName>
    <component>
        <recommendedName>
            <fullName evidence="3">Assemblin</fullName>
            <ecNumber evidence="3">3.4.21.97</ecNumber>
        </recommendedName>
        <alternativeName>
            <fullName evidence="3">Protease</fullName>
            <shortName evidence="3">Pr</shortName>
        </alternativeName>
    </component>
    <component>
        <recommendedName>
            <fullName evidence="3">Assembly protein</fullName>
            <shortName evidence="3">AP</shortName>
        </recommendedName>
        <alternativeName>
            <fullName evidence="3">Capsid assembly protein</fullName>
        </alternativeName>
    </component>
</protein>
<dbReference type="EC" id="3.4.21.97" evidence="3"/>
<dbReference type="EMBL" id="X83413">
    <property type="protein sequence ID" value="CAA58387.1"/>
    <property type="molecule type" value="Genomic_DNA"/>
</dbReference>
<dbReference type="EMBL" id="M68963">
    <property type="protein sequence ID" value="AAA65563.1"/>
    <property type="molecule type" value="Genomic_DNA"/>
</dbReference>
<dbReference type="RefSeq" id="NP_042946.1">
    <property type="nucleotide sequence ID" value="NC_001664.2"/>
</dbReference>
<dbReference type="SMR" id="P24433"/>
<dbReference type="BindingDB" id="P24433"/>
<dbReference type="ChEMBL" id="CHEMBL4010"/>
<dbReference type="MEROPS" id="S21.004"/>
<dbReference type="DNASU" id="1487933"/>
<dbReference type="GeneID" id="1487933"/>
<dbReference type="KEGG" id="vg:1487933"/>
<dbReference type="Proteomes" id="UP000009295">
    <property type="component" value="Segment"/>
</dbReference>
<dbReference type="GO" id="GO:0030430">
    <property type="term" value="C:host cell cytoplasm"/>
    <property type="evidence" value="ECO:0007669"/>
    <property type="project" value="UniProtKB-SubCell"/>
</dbReference>
<dbReference type="GO" id="GO:0042025">
    <property type="term" value="C:host cell nucleus"/>
    <property type="evidence" value="ECO:0007669"/>
    <property type="project" value="UniProtKB-SubCell"/>
</dbReference>
<dbReference type="GO" id="GO:0042802">
    <property type="term" value="F:identical protein binding"/>
    <property type="evidence" value="ECO:0007669"/>
    <property type="project" value="UniProtKB-UniRule"/>
</dbReference>
<dbReference type="GO" id="GO:0004252">
    <property type="term" value="F:serine-type endopeptidase activity"/>
    <property type="evidence" value="ECO:0007669"/>
    <property type="project" value="UniProtKB-UniRule"/>
</dbReference>
<dbReference type="GO" id="GO:0039708">
    <property type="term" value="P:nuclear capsid assembly"/>
    <property type="evidence" value="ECO:0000314"/>
    <property type="project" value="UniProtKB"/>
</dbReference>
<dbReference type="GO" id="GO:0006508">
    <property type="term" value="P:proteolysis"/>
    <property type="evidence" value="ECO:0007669"/>
    <property type="project" value="UniProtKB-KW"/>
</dbReference>
<dbReference type="GO" id="GO:0019076">
    <property type="term" value="P:viral release from host cell"/>
    <property type="evidence" value="ECO:0007669"/>
    <property type="project" value="UniProtKB-UniRule"/>
</dbReference>
<dbReference type="Gene3D" id="3.20.16.10">
    <property type="entry name" value="Herpesvirus/Caudovirus protease domain"/>
    <property type="match status" value="1"/>
</dbReference>
<dbReference type="HAMAP" id="MF_04008">
    <property type="entry name" value="HSV_SCAF"/>
    <property type="match status" value="1"/>
</dbReference>
<dbReference type="InterPro" id="IPR035443">
    <property type="entry name" value="Herpes_virus_sf"/>
</dbReference>
<dbReference type="InterPro" id="IPR001847">
    <property type="entry name" value="Peptidase_S21"/>
</dbReference>
<dbReference type="Pfam" id="PF00716">
    <property type="entry name" value="Peptidase_S21"/>
    <property type="match status" value="1"/>
</dbReference>
<dbReference type="PRINTS" id="PR00236">
    <property type="entry name" value="HSVCAPSIDP40"/>
</dbReference>
<dbReference type="SUPFAM" id="SSF50789">
    <property type="entry name" value="Herpes virus serine proteinase, assemblin"/>
    <property type="match status" value="1"/>
</dbReference>
<name>SCAF_HHV6U</name>
<sequence length="528" mass="58636">MSKVWVGGFLCVYGEEPSEECLALPRDTVQKELGSGNIPLPLNINHNEKATIGMVRGLFDLEHGLFCVAQIQSQTFMDIIRNIAGKSKLITAGSVIEPLPPDPEIECLSSSFPGLSLSSKVLQDENLDGKPFFHHVSVCGVGRRPGTIAIFGREISWILDRFSCISESEKRQVLEGVNVYSQGFDENLFSADLYDLLADSLDTSYIRKRFPKLQLDKQLCGLSKCTYIKASEPPVEIIVAATKVAGDQVQLTTEPGSELAVETCDVPVVHGNYDAVESATATTAMSNQNLPNTTPLLSSPPFSDCVFLPKDAFFSLLNVTTGQQPKIVPPVSVHPPVTEQYQMLPYSESAAKIAEHESNRYHSPCQAMYPYWQYSPVPQYPAALHGYRQSKTLKKRHFQSDSEDELSFPGDPEYTKKRRRHRVDNDDDKEMAREKNDLRELVDMIGMLRQEISALKHVRAQSPQRHIVPMETLPTIEEKGAASPKPSILNASLAPETVNRSLAGQNESTDLLKLNKKLFVDALNKMDS</sequence>
<organism>
    <name type="scientific">Human herpesvirus 6A (strain Uganda-1102)</name>
    <name type="common">HHV-6 variant A</name>
    <name type="synonym">Human B lymphotropic virus</name>
    <dbReference type="NCBI Taxonomy" id="10370"/>
    <lineage>
        <taxon>Viruses</taxon>
        <taxon>Duplodnaviria</taxon>
        <taxon>Heunggongvirae</taxon>
        <taxon>Peploviricota</taxon>
        <taxon>Herviviricetes</taxon>
        <taxon>Herpesvirales</taxon>
        <taxon>Orthoherpesviridae</taxon>
        <taxon>Betaherpesvirinae</taxon>
        <taxon>Roseolovirus</taxon>
        <taxon>Roseolovirus humanbeta6a</taxon>
        <taxon>Human betaherpesvirus 6A</taxon>
    </lineage>
</organism>
<proteinExistence type="inferred from homology"/>